<proteinExistence type="inferred from homology"/>
<comment type="function">
    <text evidence="1">This protein is involved in the repair of mismatches in DNA. It is required for dam-dependent methyl-directed DNA mismatch repair. May act as a 'molecular matchmaker', a protein that promotes the formation of a stable complex between two or more DNA-binding proteins in an ATP-dependent manner without itself being part of a final effector complex.</text>
</comment>
<comment type="similarity">
    <text evidence="1">Belongs to the DNA mismatch repair MutL/HexB family.</text>
</comment>
<organism>
    <name type="scientific">Chlorobaculum parvum (strain DSM 263 / NCIMB 8327)</name>
    <name type="common">Chlorobium vibrioforme subsp. thiosulfatophilum</name>
    <dbReference type="NCBI Taxonomy" id="517417"/>
    <lineage>
        <taxon>Bacteria</taxon>
        <taxon>Pseudomonadati</taxon>
        <taxon>Chlorobiota</taxon>
        <taxon>Chlorobiia</taxon>
        <taxon>Chlorobiales</taxon>
        <taxon>Chlorobiaceae</taxon>
        <taxon>Chlorobaculum</taxon>
    </lineage>
</organism>
<feature type="chain" id="PRO_1000096637" description="DNA mismatch repair protein MutL">
    <location>
        <begin position="1"/>
        <end position="626"/>
    </location>
</feature>
<feature type="region of interest" description="Disordered" evidence="2">
    <location>
        <begin position="385"/>
        <end position="413"/>
    </location>
</feature>
<feature type="region of interest" description="Disordered" evidence="2">
    <location>
        <begin position="418"/>
        <end position="437"/>
    </location>
</feature>
<reference key="1">
    <citation type="submission" date="2008-06" db="EMBL/GenBank/DDBJ databases">
        <title>Complete sequence of Chlorobaculum parvum NCIB 8327.</title>
        <authorList>
            <consortium name="US DOE Joint Genome Institute"/>
            <person name="Lucas S."/>
            <person name="Copeland A."/>
            <person name="Lapidus A."/>
            <person name="Glavina del Rio T."/>
            <person name="Dalin E."/>
            <person name="Tice H."/>
            <person name="Bruce D."/>
            <person name="Goodwin L."/>
            <person name="Pitluck S."/>
            <person name="Schmutz J."/>
            <person name="Larimer F."/>
            <person name="Land M."/>
            <person name="Hauser L."/>
            <person name="Kyrpides N."/>
            <person name="Mikhailova N."/>
            <person name="Zhao F."/>
            <person name="Li T."/>
            <person name="Liu Z."/>
            <person name="Overmann J."/>
            <person name="Bryant D.A."/>
            <person name="Richardson P."/>
        </authorList>
    </citation>
    <scope>NUCLEOTIDE SEQUENCE [LARGE SCALE GENOMIC DNA]</scope>
    <source>
        <strain>DSM 263 / NCIMB 8327</strain>
    </source>
</reference>
<keyword id="KW-0227">DNA damage</keyword>
<keyword id="KW-0234">DNA repair</keyword>
<name>MUTL_CHLP8</name>
<accession>B3QL59</accession>
<dbReference type="EMBL" id="CP001099">
    <property type="protein sequence ID" value="ACF12297.1"/>
    <property type="molecule type" value="Genomic_DNA"/>
</dbReference>
<dbReference type="RefSeq" id="WP_012503130.1">
    <property type="nucleotide sequence ID" value="NC_011027.1"/>
</dbReference>
<dbReference type="SMR" id="B3QL59"/>
<dbReference type="STRING" id="517417.Cpar_1905"/>
<dbReference type="KEGG" id="cpc:Cpar_1905"/>
<dbReference type="eggNOG" id="COG0323">
    <property type="taxonomic scope" value="Bacteria"/>
</dbReference>
<dbReference type="HOGENOM" id="CLU_004131_4_2_10"/>
<dbReference type="OrthoDB" id="9763467at2"/>
<dbReference type="Proteomes" id="UP000008811">
    <property type="component" value="Chromosome"/>
</dbReference>
<dbReference type="GO" id="GO:0032300">
    <property type="term" value="C:mismatch repair complex"/>
    <property type="evidence" value="ECO:0007669"/>
    <property type="project" value="InterPro"/>
</dbReference>
<dbReference type="GO" id="GO:0005524">
    <property type="term" value="F:ATP binding"/>
    <property type="evidence" value="ECO:0007669"/>
    <property type="project" value="InterPro"/>
</dbReference>
<dbReference type="GO" id="GO:0016887">
    <property type="term" value="F:ATP hydrolysis activity"/>
    <property type="evidence" value="ECO:0007669"/>
    <property type="project" value="InterPro"/>
</dbReference>
<dbReference type="GO" id="GO:0140664">
    <property type="term" value="F:ATP-dependent DNA damage sensor activity"/>
    <property type="evidence" value="ECO:0007669"/>
    <property type="project" value="InterPro"/>
</dbReference>
<dbReference type="GO" id="GO:0030983">
    <property type="term" value="F:mismatched DNA binding"/>
    <property type="evidence" value="ECO:0007669"/>
    <property type="project" value="InterPro"/>
</dbReference>
<dbReference type="GO" id="GO:0006298">
    <property type="term" value="P:mismatch repair"/>
    <property type="evidence" value="ECO:0007669"/>
    <property type="project" value="UniProtKB-UniRule"/>
</dbReference>
<dbReference type="CDD" id="cd16926">
    <property type="entry name" value="HATPase_MutL-MLH-PMS-like"/>
    <property type="match status" value="1"/>
</dbReference>
<dbReference type="CDD" id="cd00782">
    <property type="entry name" value="MutL_Trans"/>
    <property type="match status" value="1"/>
</dbReference>
<dbReference type="FunFam" id="3.30.565.10:FF:000003">
    <property type="entry name" value="DNA mismatch repair endonuclease MutL"/>
    <property type="match status" value="1"/>
</dbReference>
<dbReference type="Gene3D" id="3.30.230.10">
    <property type="match status" value="1"/>
</dbReference>
<dbReference type="Gene3D" id="3.30.565.10">
    <property type="entry name" value="Histidine kinase-like ATPase, C-terminal domain"/>
    <property type="match status" value="1"/>
</dbReference>
<dbReference type="Gene3D" id="3.30.1540.20">
    <property type="entry name" value="MutL, C-terminal domain, dimerisation subdomain"/>
    <property type="match status" value="1"/>
</dbReference>
<dbReference type="Gene3D" id="3.30.1370.100">
    <property type="entry name" value="MutL, C-terminal domain, regulatory subdomain"/>
    <property type="match status" value="1"/>
</dbReference>
<dbReference type="HAMAP" id="MF_00149">
    <property type="entry name" value="DNA_mis_repair"/>
    <property type="match status" value="1"/>
</dbReference>
<dbReference type="InterPro" id="IPR014762">
    <property type="entry name" value="DNA_mismatch_repair_CS"/>
</dbReference>
<dbReference type="InterPro" id="IPR020667">
    <property type="entry name" value="DNA_mismatch_repair_MutL"/>
</dbReference>
<dbReference type="InterPro" id="IPR013507">
    <property type="entry name" value="DNA_mismatch_S5_2-like"/>
</dbReference>
<dbReference type="InterPro" id="IPR036890">
    <property type="entry name" value="HATPase_C_sf"/>
</dbReference>
<dbReference type="InterPro" id="IPR002099">
    <property type="entry name" value="MutL/Mlh/PMS"/>
</dbReference>
<dbReference type="InterPro" id="IPR038973">
    <property type="entry name" value="MutL/Mlh/Pms-like"/>
</dbReference>
<dbReference type="InterPro" id="IPR014790">
    <property type="entry name" value="MutL_C"/>
</dbReference>
<dbReference type="InterPro" id="IPR042120">
    <property type="entry name" value="MutL_C_dimsub"/>
</dbReference>
<dbReference type="InterPro" id="IPR042121">
    <property type="entry name" value="MutL_C_regsub"/>
</dbReference>
<dbReference type="InterPro" id="IPR037198">
    <property type="entry name" value="MutL_C_sf"/>
</dbReference>
<dbReference type="InterPro" id="IPR020568">
    <property type="entry name" value="Ribosomal_Su5_D2-typ_SF"/>
</dbReference>
<dbReference type="InterPro" id="IPR014721">
    <property type="entry name" value="Ribsml_uS5_D2-typ_fold_subgr"/>
</dbReference>
<dbReference type="NCBIfam" id="TIGR00585">
    <property type="entry name" value="mutl"/>
    <property type="match status" value="1"/>
</dbReference>
<dbReference type="PANTHER" id="PTHR10073">
    <property type="entry name" value="DNA MISMATCH REPAIR PROTEIN MLH, PMS, MUTL"/>
    <property type="match status" value="1"/>
</dbReference>
<dbReference type="PANTHER" id="PTHR10073:SF12">
    <property type="entry name" value="DNA MISMATCH REPAIR PROTEIN MLH1"/>
    <property type="match status" value="1"/>
</dbReference>
<dbReference type="Pfam" id="PF01119">
    <property type="entry name" value="DNA_mis_repair"/>
    <property type="match status" value="1"/>
</dbReference>
<dbReference type="Pfam" id="PF13589">
    <property type="entry name" value="HATPase_c_3"/>
    <property type="match status" value="1"/>
</dbReference>
<dbReference type="Pfam" id="PF08676">
    <property type="entry name" value="MutL_C"/>
    <property type="match status" value="1"/>
</dbReference>
<dbReference type="SMART" id="SM01340">
    <property type="entry name" value="DNA_mis_repair"/>
    <property type="match status" value="1"/>
</dbReference>
<dbReference type="SMART" id="SM00853">
    <property type="entry name" value="MutL_C"/>
    <property type="match status" value="1"/>
</dbReference>
<dbReference type="SUPFAM" id="SSF55874">
    <property type="entry name" value="ATPase domain of HSP90 chaperone/DNA topoisomerase II/histidine kinase"/>
    <property type="match status" value="1"/>
</dbReference>
<dbReference type="SUPFAM" id="SSF118116">
    <property type="entry name" value="DNA mismatch repair protein MutL"/>
    <property type="match status" value="1"/>
</dbReference>
<dbReference type="SUPFAM" id="SSF54211">
    <property type="entry name" value="Ribosomal protein S5 domain 2-like"/>
    <property type="match status" value="1"/>
</dbReference>
<dbReference type="PROSITE" id="PS00058">
    <property type="entry name" value="DNA_MISMATCH_REPAIR_1"/>
    <property type="match status" value="1"/>
</dbReference>
<protein>
    <recommendedName>
        <fullName evidence="1">DNA mismatch repair protein MutL</fullName>
    </recommendedName>
</protein>
<gene>
    <name evidence="1" type="primary">mutL</name>
    <name type="ordered locus">Cpar_1905</name>
</gene>
<evidence type="ECO:0000255" key="1">
    <source>
        <dbReference type="HAMAP-Rule" id="MF_00149"/>
    </source>
</evidence>
<evidence type="ECO:0000256" key="2">
    <source>
        <dbReference type="SAM" id="MobiDB-lite"/>
    </source>
</evidence>
<sequence>MPSIAKLPDIVANKISAGEVVQRPASVVKELLENSIDSGASAITVVIKEAGRQLVRIIDNGCGMDSDDALLSVERFATSKISDVDDLNALRTLGFRGEALASISSVSHFELKTRRQSEPVGIQLISNGGEIEGPQPAQCEPGTSISVRNLFFNVPARRKFLKSNATEFKHIHETVKAFVLAYPEIEWRLINDDHELFYFRTPDVRERLSHFYGEGFGESLIEVTEENDYMTIGGYLGKPGMMVRQKYDQYFYINRRLIQNRMLVQAVQQAYAELLEERQSPFALLFLGLDPSLVDVNVHPAKLEVKFEDEKSIRSMVYPVVKRAVRTADFSPEATVAPSPAPVGSHGIGLPESSSRKLAYSDFSGKSSTTGDLYRNYRQGAFDLSGASVPPPSIDPVESSFGSGSGEPYPSMVQESLLTPSADQPSAADEQNPVAPDKEPKIWQLHNKYIICQIKTGLMIIDQHVAHERVLYERAIDVMNEAVPNSQQLLFPQKIDLKPWQYEVYEEISEELYRLGFTIRPFGGLSVMIEGVPPDVRDGNEATILQDMIAEYQENASKLKLEKRDNLAKSYSCRNAIMTGQKLDVEQMRMLIDRLFATRMPYVCPHGRPVIIRLSLGELDRMFGRT</sequence>